<evidence type="ECO:0000255" key="1">
    <source>
        <dbReference type="HAMAP-Rule" id="MF_00294"/>
    </source>
</evidence>
<evidence type="ECO:0000305" key="2"/>
<name>RK33_NANDO</name>
<dbReference type="EMBL" id="DQ923117">
    <property type="protein sequence ID" value="ABI49884.1"/>
    <property type="molecule type" value="Genomic_DNA"/>
</dbReference>
<dbReference type="RefSeq" id="YP_740671.1">
    <property type="nucleotide sequence ID" value="NC_008336.1"/>
</dbReference>
<dbReference type="GeneID" id="4271681"/>
<dbReference type="GO" id="GO:0009507">
    <property type="term" value="C:chloroplast"/>
    <property type="evidence" value="ECO:0007669"/>
    <property type="project" value="UniProtKB-SubCell"/>
</dbReference>
<dbReference type="GO" id="GO:1990904">
    <property type="term" value="C:ribonucleoprotein complex"/>
    <property type="evidence" value="ECO:0007669"/>
    <property type="project" value="UniProtKB-KW"/>
</dbReference>
<dbReference type="GO" id="GO:0005840">
    <property type="term" value="C:ribosome"/>
    <property type="evidence" value="ECO:0007669"/>
    <property type="project" value="UniProtKB-KW"/>
</dbReference>
<dbReference type="GO" id="GO:0003735">
    <property type="term" value="F:structural constituent of ribosome"/>
    <property type="evidence" value="ECO:0007669"/>
    <property type="project" value="InterPro"/>
</dbReference>
<dbReference type="GO" id="GO:0006412">
    <property type="term" value="P:translation"/>
    <property type="evidence" value="ECO:0007669"/>
    <property type="project" value="UniProtKB-UniRule"/>
</dbReference>
<dbReference type="Gene3D" id="2.20.28.120">
    <property type="entry name" value="Ribosomal protein L33"/>
    <property type="match status" value="1"/>
</dbReference>
<dbReference type="HAMAP" id="MF_00294">
    <property type="entry name" value="Ribosomal_bL33"/>
    <property type="match status" value="1"/>
</dbReference>
<dbReference type="InterPro" id="IPR001705">
    <property type="entry name" value="Ribosomal_bL33"/>
</dbReference>
<dbReference type="InterPro" id="IPR018264">
    <property type="entry name" value="Ribosomal_bL33_CS"/>
</dbReference>
<dbReference type="InterPro" id="IPR038584">
    <property type="entry name" value="Ribosomal_bL33_sf"/>
</dbReference>
<dbReference type="InterPro" id="IPR011332">
    <property type="entry name" value="Ribosomal_zn-bd"/>
</dbReference>
<dbReference type="NCBIfam" id="NF001764">
    <property type="entry name" value="PRK00504.1"/>
    <property type="match status" value="1"/>
</dbReference>
<dbReference type="NCBIfam" id="NF001860">
    <property type="entry name" value="PRK00595.1"/>
    <property type="match status" value="1"/>
</dbReference>
<dbReference type="NCBIfam" id="TIGR01023">
    <property type="entry name" value="rpmG_bact"/>
    <property type="match status" value="1"/>
</dbReference>
<dbReference type="PANTHER" id="PTHR43168">
    <property type="entry name" value="50S RIBOSOMAL PROTEIN L33, CHLOROPLASTIC"/>
    <property type="match status" value="1"/>
</dbReference>
<dbReference type="PANTHER" id="PTHR43168:SF2">
    <property type="entry name" value="LARGE RIBOSOMAL SUBUNIT PROTEIN BL33C"/>
    <property type="match status" value="1"/>
</dbReference>
<dbReference type="Pfam" id="PF00471">
    <property type="entry name" value="Ribosomal_L33"/>
    <property type="match status" value="1"/>
</dbReference>
<dbReference type="SUPFAM" id="SSF57829">
    <property type="entry name" value="Zn-binding ribosomal proteins"/>
    <property type="match status" value="1"/>
</dbReference>
<dbReference type="PROSITE" id="PS00582">
    <property type="entry name" value="RIBOSOMAL_L33"/>
    <property type="match status" value="1"/>
</dbReference>
<protein>
    <recommendedName>
        <fullName evidence="1">Large ribosomal subunit protein bL33c</fullName>
    </recommendedName>
    <alternativeName>
        <fullName evidence="2">50S ribosomal protein L33, chloroplastic</fullName>
    </alternativeName>
</protein>
<geneLocation type="chloroplast"/>
<comment type="subcellular location">
    <subcellularLocation>
        <location>Plastid</location>
        <location>Chloroplast</location>
    </subcellularLocation>
</comment>
<comment type="similarity">
    <text evidence="1">Belongs to the bacterial ribosomal protein bL33 family.</text>
</comment>
<proteinExistence type="inferred from homology"/>
<gene>
    <name evidence="1" type="primary">rpl33</name>
</gene>
<accession>Q09FU0</accession>
<feature type="chain" id="PRO_0000356814" description="Large ribosomal subunit protein bL33c">
    <location>
        <begin position="1"/>
        <end position="66"/>
    </location>
</feature>
<organism>
    <name type="scientific">Nandina domestica</name>
    <name type="common">Heavenly bamboo</name>
    <dbReference type="NCBI Taxonomy" id="41776"/>
    <lineage>
        <taxon>Eukaryota</taxon>
        <taxon>Viridiplantae</taxon>
        <taxon>Streptophyta</taxon>
        <taxon>Embryophyta</taxon>
        <taxon>Tracheophyta</taxon>
        <taxon>Spermatophyta</taxon>
        <taxon>Magnoliopsida</taxon>
        <taxon>Ranunculales</taxon>
        <taxon>Berberidaceae</taxon>
        <taxon>Nandinoideae</taxon>
        <taxon>Nandineae</taxon>
        <taxon>Nandina</taxon>
    </lineage>
</organism>
<sequence length="66" mass="7788">MAKGKDVRIRVILECNSCVRNDLNKESPGISRYITQKNRHNTPSRLELRKFCPYCYKHTIHGEIKK</sequence>
<keyword id="KW-0150">Chloroplast</keyword>
<keyword id="KW-0934">Plastid</keyword>
<keyword id="KW-0687">Ribonucleoprotein</keyword>
<keyword id="KW-0689">Ribosomal protein</keyword>
<reference key="1">
    <citation type="journal article" date="2006" name="BMC Plant Biol.">
        <title>Rapid and accurate pyrosequencing of angiosperm plastid genomes.</title>
        <authorList>
            <person name="Moore M.J."/>
            <person name="Dhingra A."/>
            <person name="Soltis P.S."/>
            <person name="Shaw R."/>
            <person name="Farmerie W.G."/>
            <person name="Folta K.M."/>
            <person name="Soltis D.E."/>
        </authorList>
    </citation>
    <scope>NUCLEOTIDE SEQUENCE [LARGE SCALE GENOMIC DNA]</scope>
</reference>